<protein>
    <recommendedName>
        <fullName evidence="1">Ribosomal RNA large subunit methyltransferase E</fullName>
        <ecNumber evidence="1">2.1.1.166</ecNumber>
    </recommendedName>
    <alternativeName>
        <fullName evidence="1">23S rRNA Um2552 methyltransferase</fullName>
    </alternativeName>
    <alternativeName>
        <fullName evidence="1">rRNA (uridine-2'-O-)-methyltransferase</fullName>
    </alternativeName>
</protein>
<gene>
    <name evidence="1" type="primary">rlmE</name>
    <name evidence="1" type="synonym">rrmJ</name>
    <name type="ordered locus">VNG_2263G</name>
</gene>
<sequence length="259" mass="28151">MGNRKDHYYNKSKQEGYRSRAAYKLQQLDDRFDVLFGGASVVDLGAAPGGWLQVAAERAGARGKVVGVDFQSITQFETDAGLETVRGDMTEDETRQRVRDAANGSADVVVSDMAPDMTGEYDLDHARSVHLARQALETARELLDAGGHFVVKVFDGRDFQDLLADIEDEFAFVATHSPDASRDASSELYVVGKNHIVAPIAEGDEHTVEIVDTGDEGDGIARIEGYTLFVDDAAEGDTVDVTVTDLKPNYGFAERRDGA</sequence>
<reference key="1">
    <citation type="journal article" date="2000" name="Proc. Natl. Acad. Sci. U.S.A.">
        <title>Genome sequence of Halobacterium species NRC-1.</title>
        <authorList>
            <person name="Ng W.V."/>
            <person name="Kennedy S.P."/>
            <person name="Mahairas G.G."/>
            <person name="Berquist B."/>
            <person name="Pan M."/>
            <person name="Shukla H.D."/>
            <person name="Lasky S.R."/>
            <person name="Baliga N.S."/>
            <person name="Thorsson V."/>
            <person name="Sbrogna J."/>
            <person name="Swartzell S."/>
            <person name="Weir D."/>
            <person name="Hall J."/>
            <person name="Dahl T.A."/>
            <person name="Welti R."/>
            <person name="Goo Y.A."/>
            <person name="Leithauser B."/>
            <person name="Keller K."/>
            <person name="Cruz R."/>
            <person name="Danson M.J."/>
            <person name="Hough D.W."/>
            <person name="Maddocks D.G."/>
            <person name="Jablonski P.E."/>
            <person name="Krebs M.P."/>
            <person name="Angevine C.M."/>
            <person name="Dale H."/>
            <person name="Isenbarger T.A."/>
            <person name="Peck R.F."/>
            <person name="Pohlschroder M."/>
            <person name="Spudich J.L."/>
            <person name="Jung K.-H."/>
            <person name="Alam M."/>
            <person name="Freitas T."/>
            <person name="Hou S."/>
            <person name="Daniels C.J."/>
            <person name="Dennis P.P."/>
            <person name="Omer A.D."/>
            <person name="Ebhardt H."/>
            <person name="Lowe T.M."/>
            <person name="Liang P."/>
            <person name="Riley M."/>
            <person name="Hood L."/>
            <person name="DasSarma S."/>
        </authorList>
    </citation>
    <scope>NUCLEOTIDE SEQUENCE [LARGE SCALE GENOMIC DNA]</scope>
    <source>
        <strain>ATCC 700922 / JCM 11081 / NRC-1</strain>
    </source>
</reference>
<organism>
    <name type="scientific">Halobacterium salinarum (strain ATCC 700922 / JCM 11081 / NRC-1)</name>
    <name type="common">Halobacterium halobium</name>
    <dbReference type="NCBI Taxonomy" id="64091"/>
    <lineage>
        <taxon>Archaea</taxon>
        <taxon>Methanobacteriati</taxon>
        <taxon>Methanobacteriota</taxon>
        <taxon>Stenosarchaea group</taxon>
        <taxon>Halobacteria</taxon>
        <taxon>Halobacteriales</taxon>
        <taxon>Halobacteriaceae</taxon>
        <taxon>Halobacterium</taxon>
        <taxon>Halobacterium salinarum NRC-34001</taxon>
    </lineage>
</organism>
<name>RLME_HALSA</name>
<evidence type="ECO:0000255" key="1">
    <source>
        <dbReference type="HAMAP-Rule" id="MF_01547"/>
    </source>
</evidence>
<feature type="chain" id="PRO_0000155565" description="Ribosomal RNA large subunit methyltransferase E">
    <location>
        <begin position="1"/>
        <end position="259"/>
    </location>
</feature>
<feature type="domain" description="TRAM" evidence="1">
    <location>
        <begin position="199"/>
        <end position="257"/>
    </location>
</feature>
<feature type="active site" description="Proton acceptor" evidence="1">
    <location>
        <position position="152"/>
    </location>
</feature>
<feature type="binding site" evidence="1">
    <location>
        <position position="49"/>
    </location>
    <ligand>
        <name>S-adenosyl-L-methionine</name>
        <dbReference type="ChEBI" id="CHEBI:59789"/>
    </ligand>
</feature>
<feature type="binding site" evidence="1">
    <location>
        <position position="51"/>
    </location>
    <ligand>
        <name>S-adenosyl-L-methionine</name>
        <dbReference type="ChEBI" id="CHEBI:59789"/>
    </ligand>
</feature>
<feature type="binding site" evidence="1">
    <location>
        <position position="69"/>
    </location>
    <ligand>
        <name>S-adenosyl-L-methionine</name>
        <dbReference type="ChEBI" id="CHEBI:59789"/>
    </ligand>
</feature>
<feature type="binding site" evidence="1">
    <location>
        <position position="88"/>
    </location>
    <ligand>
        <name>S-adenosyl-L-methionine</name>
        <dbReference type="ChEBI" id="CHEBI:59789"/>
    </ligand>
</feature>
<feature type="binding site" evidence="1">
    <location>
        <position position="112"/>
    </location>
    <ligand>
        <name>S-adenosyl-L-methionine</name>
        <dbReference type="ChEBI" id="CHEBI:59789"/>
    </ligand>
</feature>
<comment type="function">
    <text evidence="1">Specifically methylates the uridine in position 2552 of 23S rRNA at the 2'-O position of the ribose in the fully assembled 50S ribosomal subunit.</text>
</comment>
<comment type="catalytic activity">
    <reaction evidence="1">
        <text>uridine(2552) in 23S rRNA + S-adenosyl-L-methionine = 2'-O-methyluridine(2552) in 23S rRNA + S-adenosyl-L-homocysteine + H(+)</text>
        <dbReference type="Rhea" id="RHEA:42720"/>
        <dbReference type="Rhea" id="RHEA-COMP:10202"/>
        <dbReference type="Rhea" id="RHEA-COMP:10203"/>
        <dbReference type="ChEBI" id="CHEBI:15378"/>
        <dbReference type="ChEBI" id="CHEBI:57856"/>
        <dbReference type="ChEBI" id="CHEBI:59789"/>
        <dbReference type="ChEBI" id="CHEBI:65315"/>
        <dbReference type="ChEBI" id="CHEBI:74478"/>
        <dbReference type="EC" id="2.1.1.166"/>
    </reaction>
</comment>
<comment type="subcellular location">
    <subcellularLocation>
        <location evidence="1">Cytoplasm</location>
    </subcellularLocation>
</comment>
<comment type="similarity">
    <text evidence="1">Belongs to the class I-like SAM-binding methyltransferase superfamily. RNA methyltransferase RlmE family.</text>
</comment>
<accession>Q9HN40</accession>
<proteinExistence type="inferred from homology"/>
<keyword id="KW-0963">Cytoplasm</keyword>
<keyword id="KW-0489">Methyltransferase</keyword>
<keyword id="KW-1185">Reference proteome</keyword>
<keyword id="KW-0698">rRNA processing</keyword>
<keyword id="KW-0949">S-adenosyl-L-methionine</keyword>
<keyword id="KW-0808">Transferase</keyword>
<dbReference type="EC" id="2.1.1.166" evidence="1"/>
<dbReference type="EMBL" id="AE004437">
    <property type="protein sequence ID" value="AAG20381.1"/>
    <property type="molecule type" value="Genomic_DNA"/>
</dbReference>
<dbReference type="PIR" id="A84377">
    <property type="entry name" value="A84377"/>
</dbReference>
<dbReference type="RefSeq" id="WP_010903682.1">
    <property type="nucleotide sequence ID" value="NC_002607.1"/>
</dbReference>
<dbReference type="SMR" id="Q9HN40"/>
<dbReference type="FunCoup" id="Q9HN40">
    <property type="interactions" value="157"/>
</dbReference>
<dbReference type="STRING" id="64091.VNG_2263G"/>
<dbReference type="PaxDb" id="64091-VNG_2263G"/>
<dbReference type="KEGG" id="hal:VNG_2263G"/>
<dbReference type="PATRIC" id="fig|64091.14.peg.1743"/>
<dbReference type="HOGENOM" id="CLU_009422_4_4_2"/>
<dbReference type="InParanoid" id="Q9HN40"/>
<dbReference type="OrthoDB" id="26307at2157"/>
<dbReference type="PhylomeDB" id="Q9HN40"/>
<dbReference type="Proteomes" id="UP000000554">
    <property type="component" value="Chromosome"/>
</dbReference>
<dbReference type="GO" id="GO:0005737">
    <property type="term" value="C:cytoplasm"/>
    <property type="evidence" value="ECO:0007669"/>
    <property type="project" value="UniProtKB-SubCell"/>
</dbReference>
<dbReference type="GO" id="GO:0008173">
    <property type="term" value="F:RNA methyltransferase activity"/>
    <property type="evidence" value="ECO:0000318"/>
    <property type="project" value="GO_Central"/>
</dbReference>
<dbReference type="GO" id="GO:0008650">
    <property type="term" value="F:rRNA (uridine-2'-O-)-methyltransferase activity"/>
    <property type="evidence" value="ECO:0007669"/>
    <property type="project" value="UniProtKB-UniRule"/>
</dbReference>
<dbReference type="GO" id="GO:0001510">
    <property type="term" value="P:RNA methylation"/>
    <property type="evidence" value="ECO:0000318"/>
    <property type="project" value="GO_Central"/>
</dbReference>
<dbReference type="Gene3D" id="2.40.50.140">
    <property type="entry name" value="Nucleic acid-binding proteins"/>
    <property type="match status" value="1"/>
</dbReference>
<dbReference type="Gene3D" id="3.40.50.150">
    <property type="entry name" value="Vaccinia Virus protein VP39"/>
    <property type="match status" value="1"/>
</dbReference>
<dbReference type="HAMAP" id="MF_01547">
    <property type="entry name" value="RNA_methyltr_E"/>
    <property type="match status" value="1"/>
</dbReference>
<dbReference type="InterPro" id="IPR012340">
    <property type="entry name" value="NA-bd_OB-fold"/>
</dbReference>
<dbReference type="InterPro" id="IPR050082">
    <property type="entry name" value="RNA_methyltr_RlmE"/>
</dbReference>
<dbReference type="InterPro" id="IPR002877">
    <property type="entry name" value="RNA_MeTrfase_FtsJ_dom"/>
</dbReference>
<dbReference type="InterPro" id="IPR015507">
    <property type="entry name" value="rRNA-MeTfrase_E"/>
</dbReference>
<dbReference type="InterPro" id="IPR029063">
    <property type="entry name" value="SAM-dependent_MTases_sf"/>
</dbReference>
<dbReference type="InterPro" id="IPR002792">
    <property type="entry name" value="TRAM_dom"/>
</dbReference>
<dbReference type="PANTHER" id="PTHR10920:SF13">
    <property type="entry name" value="PRE-RRNA 2'-O-RIBOSE RNA METHYLTRANSFERASE FTSJ3"/>
    <property type="match status" value="1"/>
</dbReference>
<dbReference type="PANTHER" id="PTHR10920">
    <property type="entry name" value="RIBOSOMAL RNA METHYLTRANSFERASE"/>
    <property type="match status" value="1"/>
</dbReference>
<dbReference type="Pfam" id="PF01728">
    <property type="entry name" value="FtsJ"/>
    <property type="match status" value="1"/>
</dbReference>
<dbReference type="Pfam" id="PF01938">
    <property type="entry name" value="TRAM"/>
    <property type="match status" value="1"/>
</dbReference>
<dbReference type="SUPFAM" id="SSF50249">
    <property type="entry name" value="Nucleic acid-binding proteins"/>
    <property type="match status" value="1"/>
</dbReference>
<dbReference type="SUPFAM" id="SSF53335">
    <property type="entry name" value="S-adenosyl-L-methionine-dependent methyltransferases"/>
    <property type="match status" value="1"/>
</dbReference>
<dbReference type="PROSITE" id="PS50926">
    <property type="entry name" value="TRAM"/>
    <property type="match status" value="1"/>
</dbReference>